<name>ARAG_ECOUT</name>
<organism>
    <name type="scientific">Escherichia coli (strain UTI89 / UPEC)</name>
    <dbReference type="NCBI Taxonomy" id="364106"/>
    <lineage>
        <taxon>Bacteria</taxon>
        <taxon>Pseudomonadati</taxon>
        <taxon>Pseudomonadota</taxon>
        <taxon>Gammaproteobacteria</taxon>
        <taxon>Enterobacterales</taxon>
        <taxon>Enterobacteriaceae</taxon>
        <taxon>Escherichia</taxon>
    </lineage>
</organism>
<gene>
    <name evidence="1" type="primary">araG</name>
    <name type="ordered locus">UTI89_C2100</name>
</gene>
<evidence type="ECO:0000255" key="1">
    <source>
        <dbReference type="HAMAP-Rule" id="MF_01721"/>
    </source>
</evidence>
<evidence type="ECO:0000305" key="2"/>
<accession>Q1RAN8</accession>
<proteinExistence type="inferred from homology"/>
<feature type="chain" id="PRO_0000270467" description="Arabinose import ATP-binding protein AraG">
    <location>
        <begin position="1"/>
        <end position="504"/>
    </location>
</feature>
<feature type="domain" description="ABC transporter 1" evidence="1">
    <location>
        <begin position="8"/>
        <end position="243"/>
    </location>
</feature>
<feature type="domain" description="ABC transporter 2" evidence="1">
    <location>
        <begin position="256"/>
        <end position="499"/>
    </location>
</feature>
<feature type="binding site" evidence="1">
    <location>
        <begin position="40"/>
        <end position="47"/>
    </location>
    <ligand>
        <name>ATP</name>
        <dbReference type="ChEBI" id="CHEBI:30616"/>
    </ligand>
</feature>
<protein>
    <recommendedName>
        <fullName evidence="1">Arabinose import ATP-binding protein AraG</fullName>
        <ecNumber evidence="1">7.5.2.12</ecNumber>
    </recommendedName>
</protein>
<dbReference type="EC" id="7.5.2.12" evidence="1"/>
<dbReference type="EMBL" id="CP000243">
    <property type="protein sequence ID" value="ABE07576.1"/>
    <property type="status" value="ALT_INIT"/>
    <property type="molecule type" value="Genomic_DNA"/>
</dbReference>
<dbReference type="RefSeq" id="WP_001187785.1">
    <property type="nucleotide sequence ID" value="NZ_CP064825.1"/>
</dbReference>
<dbReference type="SMR" id="Q1RAN8"/>
<dbReference type="KEGG" id="eci:UTI89_C2100"/>
<dbReference type="HOGENOM" id="CLU_000604_92_3_6"/>
<dbReference type="Proteomes" id="UP000001952">
    <property type="component" value="Chromosome"/>
</dbReference>
<dbReference type="GO" id="GO:0005886">
    <property type="term" value="C:plasma membrane"/>
    <property type="evidence" value="ECO:0007669"/>
    <property type="project" value="UniProtKB-SubCell"/>
</dbReference>
<dbReference type="GO" id="GO:0015612">
    <property type="term" value="F:ABC-type L-arabinose transporter activity"/>
    <property type="evidence" value="ECO:0007669"/>
    <property type="project" value="UniProtKB-EC"/>
</dbReference>
<dbReference type="GO" id="GO:0005524">
    <property type="term" value="F:ATP binding"/>
    <property type="evidence" value="ECO:0007669"/>
    <property type="project" value="UniProtKB-KW"/>
</dbReference>
<dbReference type="GO" id="GO:0016887">
    <property type="term" value="F:ATP hydrolysis activity"/>
    <property type="evidence" value="ECO:0007669"/>
    <property type="project" value="InterPro"/>
</dbReference>
<dbReference type="CDD" id="cd03216">
    <property type="entry name" value="ABC_Carb_Monos_I"/>
    <property type="match status" value="1"/>
</dbReference>
<dbReference type="CDD" id="cd03215">
    <property type="entry name" value="ABC_Carb_Monos_II"/>
    <property type="match status" value="1"/>
</dbReference>
<dbReference type="FunFam" id="3.40.50.300:FF:000126">
    <property type="entry name" value="Galactose/methyl galactoside import ATP-binding protein MglA"/>
    <property type="match status" value="1"/>
</dbReference>
<dbReference type="FunFam" id="3.40.50.300:FF:000127">
    <property type="entry name" value="Ribose import ATP-binding protein RbsA"/>
    <property type="match status" value="1"/>
</dbReference>
<dbReference type="Gene3D" id="3.40.50.300">
    <property type="entry name" value="P-loop containing nucleotide triphosphate hydrolases"/>
    <property type="match status" value="2"/>
</dbReference>
<dbReference type="InterPro" id="IPR003593">
    <property type="entry name" value="AAA+_ATPase"/>
</dbReference>
<dbReference type="InterPro" id="IPR050107">
    <property type="entry name" value="ABC_carbohydrate_import_ATPase"/>
</dbReference>
<dbReference type="InterPro" id="IPR003439">
    <property type="entry name" value="ABC_transporter-like_ATP-bd"/>
</dbReference>
<dbReference type="InterPro" id="IPR017871">
    <property type="entry name" value="ABC_transporter-like_CS"/>
</dbReference>
<dbReference type="InterPro" id="IPR027417">
    <property type="entry name" value="P-loop_NTPase"/>
</dbReference>
<dbReference type="NCBIfam" id="NF008442">
    <property type="entry name" value="PRK11288.1"/>
    <property type="match status" value="1"/>
</dbReference>
<dbReference type="PANTHER" id="PTHR43790:SF6">
    <property type="entry name" value="ARABINOSE IMPORT ATP-BINDING PROTEIN ARAG"/>
    <property type="match status" value="1"/>
</dbReference>
<dbReference type="PANTHER" id="PTHR43790">
    <property type="entry name" value="CARBOHYDRATE TRANSPORT ATP-BINDING PROTEIN MG119-RELATED"/>
    <property type="match status" value="1"/>
</dbReference>
<dbReference type="Pfam" id="PF00005">
    <property type="entry name" value="ABC_tran"/>
    <property type="match status" value="2"/>
</dbReference>
<dbReference type="SMART" id="SM00382">
    <property type="entry name" value="AAA"/>
    <property type="match status" value="2"/>
</dbReference>
<dbReference type="SUPFAM" id="SSF52540">
    <property type="entry name" value="P-loop containing nucleoside triphosphate hydrolases"/>
    <property type="match status" value="2"/>
</dbReference>
<dbReference type="PROSITE" id="PS00211">
    <property type="entry name" value="ABC_TRANSPORTER_1"/>
    <property type="match status" value="1"/>
</dbReference>
<dbReference type="PROSITE" id="PS50893">
    <property type="entry name" value="ABC_TRANSPORTER_2"/>
    <property type="match status" value="2"/>
</dbReference>
<dbReference type="PROSITE" id="PS51268">
    <property type="entry name" value="ARAG"/>
    <property type="match status" value="1"/>
</dbReference>
<sequence>MQQSTPYLSFRGIGKTFPGVKALTDISFDCYAGQVHALMGENGAGKSTLLKILSGNYAPTTGSVVINGQEMSFSDTTAALNAGVAIIYQELHLVPEMTVAENIYLGQLPHKGGIVNRSLLNYEAGLQIKHLGMDIDPDTPLKYLSIGQWQMVEIAKALARNAKIIAFDEPTSSLSAREIDNLFRVIRELRKEGRVILYVSHRMEEIFALSDAITVFKDGRYVKTFTDMQQVDHDALVQAMVGRDIGDIYGWQPRSYGEERLRLDAVKAPGVRTPISLAVRSGEIVGLFGLVGAGRSELMKGMFGGTQITAGQVYIDQQPIDIRKPSHAIAAGMMLCPEDRKAEGIIPVHSVRDNINISARRKHVLGGCVINNGWEENNADHHIRSLNIKTPGAEQLIMNLSGGNQQKAILGRWLSEEMKVILLDEPTRGIDVGAKHEIYNVIYALAAQGVAVLFASSDLPEVLGVADRIVVMREGEIAGELLHEQADERQALSLAMPKVSQAVA</sequence>
<keyword id="KW-0067">ATP-binding</keyword>
<keyword id="KW-0997">Cell inner membrane</keyword>
<keyword id="KW-1003">Cell membrane</keyword>
<keyword id="KW-0472">Membrane</keyword>
<keyword id="KW-0547">Nucleotide-binding</keyword>
<keyword id="KW-0677">Repeat</keyword>
<keyword id="KW-0762">Sugar transport</keyword>
<keyword id="KW-1278">Translocase</keyword>
<keyword id="KW-0813">Transport</keyword>
<comment type="function">
    <text evidence="1">Part of the ABC transporter complex AraFGH involved in arabinose import. Responsible for energy coupling to the transport system.</text>
</comment>
<comment type="catalytic activity">
    <reaction evidence="1">
        <text>L-arabinose(out) + ATP + H2O = L-arabinose(in) + ADP + phosphate + H(+)</text>
        <dbReference type="Rhea" id="RHEA:30007"/>
        <dbReference type="ChEBI" id="CHEBI:15377"/>
        <dbReference type="ChEBI" id="CHEBI:15378"/>
        <dbReference type="ChEBI" id="CHEBI:17535"/>
        <dbReference type="ChEBI" id="CHEBI:30616"/>
        <dbReference type="ChEBI" id="CHEBI:43474"/>
        <dbReference type="ChEBI" id="CHEBI:456216"/>
        <dbReference type="EC" id="7.5.2.12"/>
    </reaction>
</comment>
<comment type="subunit">
    <text evidence="1">The complex is composed of two ATP-binding proteins (AraG), two transmembrane proteins (AraH) and a solute-binding protein (AraF).</text>
</comment>
<comment type="subcellular location">
    <subcellularLocation>
        <location evidence="1">Cell inner membrane</location>
        <topology evidence="1">Peripheral membrane protein</topology>
    </subcellularLocation>
</comment>
<comment type="similarity">
    <text evidence="1">Belongs to the ABC transporter superfamily. Arabinose importer (TC 3.A.1.2.2) family.</text>
</comment>
<comment type="sequence caution" evidence="2">
    <conflict type="erroneous initiation">
        <sequence resource="EMBL-CDS" id="ABE07576"/>
    </conflict>
</comment>
<reference key="1">
    <citation type="journal article" date="2006" name="Proc. Natl. Acad. Sci. U.S.A.">
        <title>Identification of genes subject to positive selection in uropathogenic strains of Escherichia coli: a comparative genomics approach.</title>
        <authorList>
            <person name="Chen S.L."/>
            <person name="Hung C.-S."/>
            <person name="Xu J."/>
            <person name="Reigstad C.S."/>
            <person name="Magrini V."/>
            <person name="Sabo A."/>
            <person name="Blasiar D."/>
            <person name="Bieri T."/>
            <person name="Meyer R.R."/>
            <person name="Ozersky P."/>
            <person name="Armstrong J.R."/>
            <person name="Fulton R.S."/>
            <person name="Latreille J.P."/>
            <person name="Spieth J."/>
            <person name="Hooton T.M."/>
            <person name="Mardis E.R."/>
            <person name="Hultgren S.J."/>
            <person name="Gordon J.I."/>
        </authorList>
    </citation>
    <scope>NUCLEOTIDE SEQUENCE [LARGE SCALE GENOMIC DNA]</scope>
    <source>
        <strain>UTI89 / UPEC</strain>
    </source>
</reference>